<organism>
    <name type="scientific">Berberis stolonifera</name>
    <name type="common">Barberry</name>
    <dbReference type="NCBI Taxonomy" id="33814"/>
    <lineage>
        <taxon>Eukaryota</taxon>
        <taxon>Viridiplantae</taxon>
        <taxon>Streptophyta</taxon>
        <taxon>Embryophyta</taxon>
        <taxon>Tracheophyta</taxon>
        <taxon>Spermatophyta</taxon>
        <taxon>Magnoliopsida</taxon>
        <taxon>Ranunculales</taxon>
        <taxon>Berberidaceae</taxon>
        <taxon>Berberidoideae</taxon>
        <taxon>Berberideae</taxon>
        <taxon>Berberis</taxon>
    </lineage>
</organism>
<gene>
    <name type="primary">CYP80A1</name>
    <name type="synonym">CYP80</name>
</gene>
<keyword id="KW-0017">Alkaloid metabolism</keyword>
<keyword id="KW-0903">Direct protein sequencing</keyword>
<keyword id="KW-0256">Endoplasmic reticulum</keyword>
<keyword id="KW-0349">Heme</keyword>
<keyword id="KW-0408">Iron</keyword>
<keyword id="KW-0472">Membrane</keyword>
<keyword id="KW-0479">Metal-binding</keyword>
<keyword id="KW-0492">Microsome</keyword>
<keyword id="KW-0503">Monooxygenase</keyword>
<keyword id="KW-0560">Oxidoreductase</keyword>
<reference key="1">
    <citation type="journal article" date="1995" name="Proc. Natl. Acad. Sci. U.S.A.">
        <title>Molecular cloning and heterologous expression of a cDNA encoding berbamunine synthase, a C-O phenol-coupling cytochrome P450 from the higher plant Berberis stolonifera.</title>
        <authorList>
            <person name="Kraus P.F.X."/>
            <person name="Kutchan T.M."/>
        </authorList>
    </citation>
    <scope>NUCLEOTIDE SEQUENCE [MRNA]</scope>
    <scope>PROTEIN SEQUENCE OF 1-24</scope>
    <source>
        <strain>WOLF V29</strain>
    </source>
</reference>
<reference key="2">
    <citation type="journal article" date="1993" name="J. Biol. Chem.">
        <title>The purification and characterization of a unique cytochrome P-450 enzyme from Berberis stolonifera plant cell cultures.</title>
        <authorList>
            <person name="Stadler R."/>
            <person name="Zenk M.H."/>
        </authorList>
    </citation>
    <scope>FUNCTION</scope>
    <scope>CATALYTIC ACTIVITY</scope>
</reference>
<dbReference type="EC" id="1.14.19.66" evidence="2"/>
<dbReference type="EMBL" id="U09610">
    <property type="protein sequence ID" value="AAC48987.1"/>
    <property type="molecule type" value="mRNA"/>
</dbReference>
<dbReference type="SMR" id="P47195"/>
<dbReference type="KEGG" id="ag:AAC48987"/>
<dbReference type="BRENDA" id="1.14.19.66">
    <property type="organism ID" value="830"/>
</dbReference>
<dbReference type="UniPathway" id="UPA00308">
    <property type="reaction ID" value="UER00446"/>
</dbReference>
<dbReference type="GO" id="GO:0005789">
    <property type="term" value="C:endoplasmic reticulum membrane"/>
    <property type="evidence" value="ECO:0007669"/>
    <property type="project" value="UniProtKB-SubCell"/>
</dbReference>
<dbReference type="GO" id="GO:0047054">
    <property type="term" value="F:berbamunine synthase activity"/>
    <property type="evidence" value="ECO:0007669"/>
    <property type="project" value="UniProtKB-EC"/>
</dbReference>
<dbReference type="GO" id="GO:0020037">
    <property type="term" value="F:heme binding"/>
    <property type="evidence" value="ECO:0007669"/>
    <property type="project" value="InterPro"/>
</dbReference>
<dbReference type="GO" id="GO:0005506">
    <property type="term" value="F:iron ion binding"/>
    <property type="evidence" value="ECO:0007669"/>
    <property type="project" value="InterPro"/>
</dbReference>
<dbReference type="GO" id="GO:0004497">
    <property type="term" value="F:monooxygenase activity"/>
    <property type="evidence" value="ECO:0007669"/>
    <property type="project" value="UniProtKB-KW"/>
</dbReference>
<dbReference type="GO" id="GO:0035833">
    <property type="term" value="P:berbamunine biosynthetic process"/>
    <property type="evidence" value="ECO:0007669"/>
    <property type="project" value="UniProtKB-UniPathway"/>
</dbReference>
<dbReference type="CDD" id="cd11073">
    <property type="entry name" value="CYP76-like"/>
    <property type="match status" value="1"/>
</dbReference>
<dbReference type="FunFam" id="1.10.630.10:FF:000126">
    <property type="entry name" value="Predicted protein"/>
    <property type="match status" value="1"/>
</dbReference>
<dbReference type="Gene3D" id="1.10.630.10">
    <property type="entry name" value="Cytochrome P450"/>
    <property type="match status" value="1"/>
</dbReference>
<dbReference type="InterPro" id="IPR001128">
    <property type="entry name" value="Cyt_P450"/>
</dbReference>
<dbReference type="InterPro" id="IPR017972">
    <property type="entry name" value="Cyt_P450_CS"/>
</dbReference>
<dbReference type="InterPro" id="IPR002401">
    <property type="entry name" value="Cyt_P450_E_grp-I"/>
</dbReference>
<dbReference type="InterPro" id="IPR036396">
    <property type="entry name" value="Cyt_P450_sf"/>
</dbReference>
<dbReference type="PANTHER" id="PTHR47950:SF49">
    <property type="entry name" value="CYTOCHROME P450"/>
    <property type="match status" value="1"/>
</dbReference>
<dbReference type="PANTHER" id="PTHR47950">
    <property type="entry name" value="CYTOCHROME P450, FAMILY 76, SUBFAMILY C, POLYPEPTIDE 5-RELATED"/>
    <property type="match status" value="1"/>
</dbReference>
<dbReference type="Pfam" id="PF00067">
    <property type="entry name" value="p450"/>
    <property type="match status" value="1"/>
</dbReference>
<dbReference type="PRINTS" id="PR00463">
    <property type="entry name" value="EP450I"/>
</dbReference>
<dbReference type="PRINTS" id="PR00385">
    <property type="entry name" value="P450"/>
</dbReference>
<dbReference type="SUPFAM" id="SSF48264">
    <property type="entry name" value="Cytochrome P450"/>
    <property type="match status" value="1"/>
</dbReference>
<dbReference type="PROSITE" id="PS00086">
    <property type="entry name" value="CYTOCHROME_P450"/>
    <property type="match status" value="1"/>
</dbReference>
<accession>P47195</accession>
<comment type="function">
    <text evidence="2">Forms the bisbenzylisoquinoline alkaloid berbamunine by phenol oxidation of N-methylcoclaurine without the incorporation of oxygen into the product. Oxidatively couples either two molecules of (R)-N-methylcoclaurine to form the (R,R) dimer guattegaumerine or one molecule each of (R)- and (S)-N-methylcoclaurine to form the (R,S) dimer berbamunine.</text>
</comment>
<comment type="catalytic activity">
    <reaction evidence="2">
        <text>(R)-N-methylcoclaurine + (S)-N-methylcoclaurine + reduced [NADPH--hemoprotein reductase] + O2 = berbamunine + oxidized [NADPH--hemoprotein reductase] + 2 H2O + H(+)</text>
        <dbReference type="Rhea" id="RHEA:23576"/>
        <dbReference type="Rhea" id="RHEA-COMP:11964"/>
        <dbReference type="Rhea" id="RHEA-COMP:11965"/>
        <dbReference type="ChEBI" id="CHEBI:15377"/>
        <dbReference type="ChEBI" id="CHEBI:15378"/>
        <dbReference type="ChEBI" id="CHEBI:15379"/>
        <dbReference type="ChEBI" id="CHEBI:57618"/>
        <dbReference type="ChEBI" id="CHEBI:57755"/>
        <dbReference type="ChEBI" id="CHEBI:57894"/>
        <dbReference type="ChEBI" id="CHEBI:57993"/>
        <dbReference type="ChEBI" id="CHEBI:58210"/>
        <dbReference type="EC" id="1.14.19.66"/>
    </reaction>
</comment>
<comment type="cofactor">
    <cofactor evidence="1">
        <name>heme</name>
        <dbReference type="ChEBI" id="CHEBI:30413"/>
    </cofactor>
</comment>
<comment type="pathway">
    <text>Alkaloid biosynthesis; berbamunine biosynthesis; berbamunine from (R)-N-methylcoclaurine and (S)-N-methylcoclaurine: step 1/1.</text>
</comment>
<comment type="subcellular location">
    <subcellularLocation>
        <location>Endoplasmic reticulum membrane</location>
        <topology>Peripheral membrane protein</topology>
    </subcellularLocation>
    <subcellularLocation>
        <location>Microsome membrane</location>
        <topology>Peripheral membrane protein</topology>
    </subcellularLocation>
</comment>
<comment type="similarity">
    <text evidence="3">Belongs to the cytochrome P450 family.</text>
</comment>
<sequence>MDYIVGFVSISLVALLYFLLFKPKHTNLPPSPPAWPIVGHLPDLISKNSPPFLDYMSNIAQKYGPLIHLKFGLHSSIFASTKEAAMEVLQTNDKVLSGRQPLPCFRIKPHIDYSILWSDSNSYWKKGRKILHTEIFSQKMLQAQEKNRERVAGNLVNFIMTKVGDVVELRSWLFGCALNVLGHVVFSKDVFEYSDQSDEVGMDKLIHGMLMTGGDFDVASYFPVLARFDLHGLKRKMDEQFKLLIKIWEGEVLARRANRNPEPKDMLDVLIANDFNEHQINAMFMETFGPGSDTNSNIIEWALAQLIKNPDKLAKLREELDRVVGRSSTVKESHFSELPYLQACVKETMRLYPPISIMIPHRCMETCQVMGYTIPKGMDVHVNAHAIGRDPKDWKDPLKFQPERFLDSDIEYNGKQFQFIPFGSGRRICPGRPLAVRIIPLVLASLVHAFGWELPDGVPNEKLDMEELFTLSLCMAKPLRVIPKVRI</sequence>
<proteinExistence type="evidence at protein level"/>
<protein>
    <recommendedName>
        <fullName>Berbamunine synthase</fullName>
        <ecNumber evidence="2">1.14.19.66</ecNumber>
    </recommendedName>
    <alternativeName>
        <fullName>(S)-N-methylcoclaurine oxidase [C-O phenol-coupling]</fullName>
    </alternativeName>
    <alternativeName>
        <fullName>CYPLXXX</fullName>
    </alternativeName>
    <alternativeName>
        <fullName>Cytochrome P450 80</fullName>
    </alternativeName>
</protein>
<feature type="chain" id="PRO_0000052156" description="Berbamunine synthase">
    <location>
        <begin position="1"/>
        <end position="487"/>
    </location>
</feature>
<feature type="binding site" description="axial binding residue" evidence="1">
    <location>
        <position position="429"/>
    </location>
    <ligand>
        <name>heme</name>
        <dbReference type="ChEBI" id="CHEBI:30413"/>
    </ligand>
    <ligandPart>
        <name>Fe</name>
        <dbReference type="ChEBI" id="CHEBI:18248"/>
    </ligandPart>
</feature>
<evidence type="ECO:0000250" key="1"/>
<evidence type="ECO:0000269" key="2">
    <source>
    </source>
</evidence>
<evidence type="ECO:0000305" key="3"/>
<name>C80A1_BERST</name>